<reference key="1">
    <citation type="submission" date="2006-04" db="EMBL/GenBank/DDBJ databases">
        <authorList>
            <consortium name="NIH - Mammalian Gene Collection (MGC) project"/>
        </authorList>
    </citation>
    <scope>NUCLEOTIDE SEQUENCE [LARGE SCALE MRNA]</scope>
    <source>
        <strain>Hereford</strain>
        <tissue>Uterus</tissue>
    </source>
</reference>
<keyword id="KW-0067">ATP-binding</keyword>
<keyword id="KW-0547">Nucleotide-binding</keyword>
<keyword id="KW-1185">Reference proteome</keyword>
<keyword id="KW-0808">Transferase</keyword>
<keyword id="KW-0833">Ubl conjugation pathway</keyword>
<proteinExistence type="evidence at transcript level"/>
<name>UB2D2_BOVIN</name>
<comment type="function">
    <text evidence="1">Accepts ubiquitin from the E1 complex and catalyzes its covalent attachment to other proteins. In vitro catalyzes 'Lys-48'-linked polyubiquitination. Mediates the selective degradation of short-lived and abnormal proteins. Functions in the E6/E6-AP-induced ubiquitination of p53/TP53. Mediates ubiquitination of PEX5 and SQSTM1 and autoubiquitination of STUB1 and TRAF6. Involved in the signal-induced conjugation and subsequent degradation of NFKBIA, FBXW2-mediated GCM1 ubiquitination and degradation, MDM2-dependent degradation of p53/TP53 and the activation of MAVS in the mitochondria by RIGI in response to viral infection. Essential for viral activation of IRF3.</text>
</comment>
<comment type="catalytic activity">
    <reaction evidence="1 3 4">
        <text>S-ubiquitinyl-[E1 ubiquitin-activating enzyme]-L-cysteine + [E2 ubiquitin-conjugating enzyme]-L-cysteine = [E1 ubiquitin-activating enzyme]-L-cysteine + S-ubiquitinyl-[E2 ubiquitin-conjugating enzyme]-L-cysteine.</text>
        <dbReference type="EC" id="2.3.2.23"/>
    </reaction>
</comment>
<comment type="catalytic activity">
    <reaction evidence="1">
        <text>S-ubiquitinyl-[E1 ubiquitin-activating enzyme]-L-cysteine + [acceptor protein]-L-lysine = [E1 ubiquitin-activating enzyme]-L-cysteine + N(6)-monoubiquitinyl-[acceptor protein]-L-lysine.</text>
        <dbReference type="EC" id="2.3.2.24"/>
    </reaction>
</comment>
<comment type="pathway">
    <text evidence="3">Protein modification; protein ubiquitination.</text>
</comment>
<comment type="subunit">
    <text evidence="1 2">Interacts with SCF (SKP1-CUL1-F-box protein) E3 ubiquitin ligase complex. Interacts with CNOT4 (via RING domain). Interacts with E3 ubiquitin-protein ligases CBLC, PJA1 and PJA2. Interacts with PDZRN3. Interacts with PPP1R11. Interacts with E3 ubiquitin-protein ligase PHF7; the interaction inhibits cleavage of PHF7 and promotes association of the complex with the nucleosome core particle (By similarity).</text>
</comment>
<comment type="similarity">
    <text evidence="3">Belongs to the ubiquitin-conjugating enzyme family.</text>
</comment>
<dbReference type="EC" id="2.3.2.23"/>
<dbReference type="EC" id="2.3.2.24"/>
<dbReference type="EMBL" id="BC114654">
    <property type="protein sequence ID" value="AAI14655.1"/>
    <property type="molecule type" value="mRNA"/>
</dbReference>
<dbReference type="RefSeq" id="NP_001039961.1">
    <property type="nucleotide sequence ID" value="NM_001046496.1"/>
</dbReference>
<dbReference type="SMR" id="Q1RMX2"/>
<dbReference type="FunCoup" id="Q1RMX2">
    <property type="interactions" value="3774"/>
</dbReference>
<dbReference type="IntAct" id="Q1RMX2">
    <property type="interactions" value="3"/>
</dbReference>
<dbReference type="STRING" id="9913.ENSBTAP00000049292"/>
<dbReference type="PaxDb" id="9913-ENSBTAP00000049292"/>
<dbReference type="Ensembl" id="ENSBTAT00000055723.2">
    <property type="protein sequence ID" value="ENSBTAP00000049292.1"/>
    <property type="gene ID" value="ENSBTAG00000004161.7"/>
</dbReference>
<dbReference type="GeneID" id="541003"/>
<dbReference type="KEGG" id="bta:541003"/>
<dbReference type="CTD" id="7322"/>
<dbReference type="VEuPathDB" id="HostDB:ENSBTAG00000004161"/>
<dbReference type="VGNC" id="VGNC:36580">
    <property type="gene designation" value="UBE2D2"/>
</dbReference>
<dbReference type="eggNOG" id="KOG0417">
    <property type="taxonomic scope" value="Eukaryota"/>
</dbReference>
<dbReference type="GeneTree" id="ENSGT00940000153169"/>
<dbReference type="HOGENOM" id="CLU_030988_13_3_1"/>
<dbReference type="InParanoid" id="Q1RMX2"/>
<dbReference type="OMA" id="VHFTTRI"/>
<dbReference type="OrthoDB" id="7851174at2759"/>
<dbReference type="TreeFam" id="TF101108"/>
<dbReference type="Reactome" id="R-BTA-1234176">
    <property type="pathway name" value="Oxygen-dependent proline hydroxylation of Hypoxia-inducible Factor Alpha"/>
</dbReference>
<dbReference type="Reactome" id="R-BTA-202424">
    <property type="pathway name" value="Downstream TCR signaling"/>
</dbReference>
<dbReference type="Reactome" id="R-BTA-2871837">
    <property type="pathway name" value="FCERI mediated NF-kB activation"/>
</dbReference>
<dbReference type="Reactome" id="R-BTA-5357905">
    <property type="pathway name" value="Regulation of TNFR1 signaling"/>
</dbReference>
<dbReference type="Reactome" id="R-BTA-5607764">
    <property type="pathway name" value="CLEC7A (Dectin-1) signaling"/>
</dbReference>
<dbReference type="Reactome" id="R-BTA-8866652">
    <property type="pathway name" value="Synthesis of active ubiquitin: roles of E1 and E2 enzymes"/>
</dbReference>
<dbReference type="Reactome" id="R-BTA-8866654">
    <property type="pathway name" value="E3 ubiquitin ligases ubiquitinate target proteins"/>
</dbReference>
<dbReference type="Reactome" id="R-BTA-8951664">
    <property type="pathway name" value="Neddylation"/>
</dbReference>
<dbReference type="Reactome" id="R-BTA-9033241">
    <property type="pathway name" value="Peroxisomal protein import"/>
</dbReference>
<dbReference type="Reactome" id="R-BTA-937041">
    <property type="pathway name" value="IKK complex recruitment mediated by RIP1"/>
</dbReference>
<dbReference type="Reactome" id="R-BTA-9705462">
    <property type="pathway name" value="Inactivation of CSF3 (G-CSF) signaling"/>
</dbReference>
<dbReference type="Reactome" id="R-BTA-983168">
    <property type="pathway name" value="Antigen processing: Ubiquitination &amp; Proteasome degradation"/>
</dbReference>
<dbReference type="UniPathway" id="UPA00143"/>
<dbReference type="Proteomes" id="UP000009136">
    <property type="component" value="Chromosome 7"/>
</dbReference>
<dbReference type="Bgee" id="ENSBTAG00000004161">
    <property type="expression patterns" value="Expressed in retropharyngeal lymph node and 103 other cell types or tissues"/>
</dbReference>
<dbReference type="GO" id="GO:0005634">
    <property type="term" value="C:nucleus"/>
    <property type="evidence" value="ECO:0000318"/>
    <property type="project" value="GO_Central"/>
</dbReference>
<dbReference type="GO" id="GO:0032991">
    <property type="term" value="C:protein-containing complex"/>
    <property type="evidence" value="ECO:0007669"/>
    <property type="project" value="Ensembl"/>
</dbReference>
<dbReference type="GO" id="GO:0005524">
    <property type="term" value="F:ATP binding"/>
    <property type="evidence" value="ECO:0007669"/>
    <property type="project" value="UniProtKB-KW"/>
</dbReference>
<dbReference type="GO" id="GO:0061631">
    <property type="term" value="F:ubiquitin conjugating enzyme activity"/>
    <property type="evidence" value="ECO:0000318"/>
    <property type="project" value="GO_Central"/>
</dbReference>
<dbReference type="GO" id="GO:0061630">
    <property type="term" value="F:ubiquitin protein ligase activity"/>
    <property type="evidence" value="ECO:0007669"/>
    <property type="project" value="Ensembl"/>
</dbReference>
<dbReference type="GO" id="GO:0004842">
    <property type="term" value="F:ubiquitin-protein transferase activity"/>
    <property type="evidence" value="ECO:0000250"/>
    <property type="project" value="UniProtKB"/>
</dbReference>
<dbReference type="GO" id="GO:0051865">
    <property type="term" value="P:protein autoubiquitination"/>
    <property type="evidence" value="ECO:0007669"/>
    <property type="project" value="Ensembl"/>
</dbReference>
<dbReference type="GO" id="GO:0070936">
    <property type="term" value="P:protein K48-linked ubiquitination"/>
    <property type="evidence" value="ECO:0000250"/>
    <property type="project" value="UniProtKB"/>
</dbReference>
<dbReference type="GO" id="GO:0006511">
    <property type="term" value="P:ubiquitin-dependent protein catabolic process"/>
    <property type="evidence" value="ECO:0000318"/>
    <property type="project" value="GO_Central"/>
</dbReference>
<dbReference type="CDD" id="cd23792">
    <property type="entry name" value="UBCc_UBE2D"/>
    <property type="match status" value="1"/>
</dbReference>
<dbReference type="FunFam" id="3.10.110.10:FF:000101">
    <property type="entry name" value="Ubiquitin-conjugating enzyme E2 D2"/>
    <property type="match status" value="1"/>
</dbReference>
<dbReference type="Gene3D" id="3.10.110.10">
    <property type="entry name" value="Ubiquitin Conjugating Enzyme"/>
    <property type="match status" value="1"/>
</dbReference>
<dbReference type="InterPro" id="IPR000608">
    <property type="entry name" value="UBQ-conjugat_E2_core"/>
</dbReference>
<dbReference type="InterPro" id="IPR023313">
    <property type="entry name" value="UBQ-conjugating_AS"/>
</dbReference>
<dbReference type="InterPro" id="IPR016135">
    <property type="entry name" value="UBQ-conjugating_enzyme/RWD"/>
</dbReference>
<dbReference type="PANTHER" id="PTHR24068">
    <property type="entry name" value="UBIQUITIN-CONJUGATING ENZYME E2"/>
    <property type="match status" value="1"/>
</dbReference>
<dbReference type="Pfam" id="PF00179">
    <property type="entry name" value="UQ_con"/>
    <property type="match status" value="1"/>
</dbReference>
<dbReference type="SMART" id="SM00212">
    <property type="entry name" value="UBCc"/>
    <property type="match status" value="1"/>
</dbReference>
<dbReference type="SUPFAM" id="SSF54495">
    <property type="entry name" value="UBC-like"/>
    <property type="match status" value="1"/>
</dbReference>
<dbReference type="PROSITE" id="PS00183">
    <property type="entry name" value="UBC_1"/>
    <property type="match status" value="1"/>
</dbReference>
<dbReference type="PROSITE" id="PS50127">
    <property type="entry name" value="UBC_2"/>
    <property type="match status" value="1"/>
</dbReference>
<accession>Q1RMX2</accession>
<feature type="chain" id="PRO_0000245034" description="Ubiquitin-conjugating enzyme E2 D2">
    <location>
        <begin position="1"/>
        <end position="147"/>
    </location>
</feature>
<feature type="domain" description="UBC core" evidence="3">
    <location>
        <begin position="1"/>
        <end position="147"/>
    </location>
</feature>
<feature type="active site" description="Glycyl thioester intermediate" evidence="3 4">
    <location>
        <position position="85"/>
    </location>
</feature>
<protein>
    <recommendedName>
        <fullName>Ubiquitin-conjugating enzyme E2 D2</fullName>
        <ecNumber>2.3.2.23</ecNumber>
    </recommendedName>
    <alternativeName>
        <fullName>(E3-independent) E2 ubiquitin-conjugating enzyme D2</fullName>
        <ecNumber>2.3.2.24</ecNumber>
    </alternativeName>
    <alternativeName>
        <fullName>E2 ubiquitin-conjugating enzyme D2</fullName>
    </alternativeName>
    <alternativeName>
        <fullName>Ubiquitin carrier protein D2</fullName>
    </alternativeName>
    <alternativeName>
        <fullName>Ubiquitin-protein ligase D2</fullName>
    </alternativeName>
</protein>
<organism>
    <name type="scientific">Bos taurus</name>
    <name type="common">Bovine</name>
    <dbReference type="NCBI Taxonomy" id="9913"/>
    <lineage>
        <taxon>Eukaryota</taxon>
        <taxon>Metazoa</taxon>
        <taxon>Chordata</taxon>
        <taxon>Craniata</taxon>
        <taxon>Vertebrata</taxon>
        <taxon>Euteleostomi</taxon>
        <taxon>Mammalia</taxon>
        <taxon>Eutheria</taxon>
        <taxon>Laurasiatheria</taxon>
        <taxon>Artiodactyla</taxon>
        <taxon>Ruminantia</taxon>
        <taxon>Pecora</taxon>
        <taxon>Bovidae</taxon>
        <taxon>Bovinae</taxon>
        <taxon>Bos</taxon>
    </lineage>
</organism>
<evidence type="ECO:0000250" key="1">
    <source>
        <dbReference type="UniProtKB" id="P62837"/>
    </source>
</evidence>
<evidence type="ECO:0000250" key="2">
    <source>
        <dbReference type="UniProtKB" id="P62838"/>
    </source>
</evidence>
<evidence type="ECO:0000255" key="3">
    <source>
        <dbReference type="PROSITE-ProRule" id="PRU00388"/>
    </source>
</evidence>
<evidence type="ECO:0000255" key="4">
    <source>
        <dbReference type="PROSITE-ProRule" id="PRU10133"/>
    </source>
</evidence>
<gene>
    <name type="primary">UBE2D2</name>
    <name type="synonym">UBC4</name>
    <name type="synonym">UBCH4</name>
    <name type="synonym">UBCH5B</name>
</gene>
<sequence length="147" mass="16735">MALKRIHKELNDLARDPPAQCSAGPVGDDMFHWQATIMGPNDSPYQGGVFFLTIHFPTDYPFKPPKVAFTTRIYHPNINSNGSICLDILRSQWSPALTISKVLLSICSLLCDPNPDDPLVPEIARIYKTDREKYNRIAREWTQKYAM</sequence>